<organism>
    <name type="scientific">Roseobacter denitrificans (strain ATCC 33942 / OCh 114)</name>
    <name type="common">Erythrobacter sp. (strain OCh 114)</name>
    <name type="synonym">Roseobacter denitrificans</name>
    <dbReference type="NCBI Taxonomy" id="375451"/>
    <lineage>
        <taxon>Bacteria</taxon>
        <taxon>Pseudomonadati</taxon>
        <taxon>Pseudomonadota</taxon>
        <taxon>Alphaproteobacteria</taxon>
        <taxon>Rhodobacterales</taxon>
        <taxon>Roseobacteraceae</taxon>
        <taxon>Roseobacter</taxon>
    </lineage>
</organism>
<sequence>MAKRDYYEVLGVSKGASSDDIKKGYRRKAKELHPDRNKDDPNAEAQFKEANEAYEVLKDADKKAAYDRYGHAAFEGGMGGGGGGRPGGGFGGGQDFSSAFSDVFDDLFGNFAGGGQRGGGNRASRGSDLRYNLQINLEDAFSGLQKTINVPTSIGCKTCNGSGAEGGSEPSSCPTCSGMGKVRAQQGFFTVERTCPTCSGLGQIIKNPCKSCQGAGRVEKDRALSVNIPAGVETGTRIRLAGEGEAGMRGGPSGDLYIFIEVAEHELFQRDGTNLFCRVPVSMAKAALGGSIEVPTIDGGRGRVQIPSGSQSGRQMRLRGKGMPALRGGSSGDMFIELAVETPVNLTSRQKELLAEFDELSENNNPESSSFFSSVKSFWDSMKG</sequence>
<reference key="1">
    <citation type="journal article" date="2007" name="J. Bacteriol.">
        <title>The complete genome sequence of Roseobacter denitrificans reveals a mixotrophic rather than photosynthetic metabolism.</title>
        <authorList>
            <person name="Swingley W.D."/>
            <person name="Sadekar S."/>
            <person name="Mastrian S.D."/>
            <person name="Matthies H.J."/>
            <person name="Hao J."/>
            <person name="Ramos H."/>
            <person name="Acharya C.R."/>
            <person name="Conrad A.L."/>
            <person name="Taylor H.L."/>
            <person name="Dejesa L.C."/>
            <person name="Shah M.K."/>
            <person name="O'Huallachain M.E."/>
            <person name="Lince M.T."/>
            <person name="Blankenship R.E."/>
            <person name="Beatty J.T."/>
            <person name="Touchman J.W."/>
        </authorList>
    </citation>
    <scope>NUCLEOTIDE SEQUENCE [LARGE SCALE GENOMIC DNA]</scope>
    <source>
        <strain>ATCC 33942 / OCh 114</strain>
    </source>
</reference>
<feature type="chain" id="PRO_1000085278" description="Chaperone protein DnaJ">
    <location>
        <begin position="1"/>
        <end position="384"/>
    </location>
</feature>
<feature type="domain" description="J" evidence="1">
    <location>
        <begin position="5"/>
        <end position="70"/>
    </location>
</feature>
<feature type="repeat" description="CXXCXGXG motif">
    <location>
        <begin position="156"/>
        <end position="163"/>
    </location>
</feature>
<feature type="repeat" description="CXXCXGXG motif">
    <location>
        <begin position="173"/>
        <end position="180"/>
    </location>
</feature>
<feature type="repeat" description="CXXCXGXG motif">
    <location>
        <begin position="195"/>
        <end position="202"/>
    </location>
</feature>
<feature type="repeat" description="CXXCXGXG motif">
    <location>
        <begin position="209"/>
        <end position="216"/>
    </location>
</feature>
<feature type="zinc finger region" description="CR-type" evidence="1">
    <location>
        <begin position="143"/>
        <end position="221"/>
    </location>
</feature>
<feature type="region of interest" description="Disordered" evidence="2">
    <location>
        <begin position="16"/>
        <end position="47"/>
    </location>
</feature>
<feature type="compositionally biased region" description="Basic and acidic residues" evidence="2">
    <location>
        <begin position="31"/>
        <end position="47"/>
    </location>
</feature>
<feature type="binding site" evidence="1">
    <location>
        <position position="156"/>
    </location>
    <ligand>
        <name>Zn(2+)</name>
        <dbReference type="ChEBI" id="CHEBI:29105"/>
        <label>1</label>
    </ligand>
</feature>
<feature type="binding site" evidence="1">
    <location>
        <position position="159"/>
    </location>
    <ligand>
        <name>Zn(2+)</name>
        <dbReference type="ChEBI" id="CHEBI:29105"/>
        <label>1</label>
    </ligand>
</feature>
<feature type="binding site" evidence="1">
    <location>
        <position position="173"/>
    </location>
    <ligand>
        <name>Zn(2+)</name>
        <dbReference type="ChEBI" id="CHEBI:29105"/>
        <label>2</label>
    </ligand>
</feature>
<feature type="binding site" evidence="1">
    <location>
        <position position="176"/>
    </location>
    <ligand>
        <name>Zn(2+)</name>
        <dbReference type="ChEBI" id="CHEBI:29105"/>
        <label>2</label>
    </ligand>
</feature>
<feature type="binding site" evidence="1">
    <location>
        <position position="195"/>
    </location>
    <ligand>
        <name>Zn(2+)</name>
        <dbReference type="ChEBI" id="CHEBI:29105"/>
        <label>2</label>
    </ligand>
</feature>
<feature type="binding site" evidence="1">
    <location>
        <position position="198"/>
    </location>
    <ligand>
        <name>Zn(2+)</name>
        <dbReference type="ChEBI" id="CHEBI:29105"/>
        <label>2</label>
    </ligand>
</feature>
<feature type="binding site" evidence="1">
    <location>
        <position position="209"/>
    </location>
    <ligand>
        <name>Zn(2+)</name>
        <dbReference type="ChEBI" id="CHEBI:29105"/>
        <label>1</label>
    </ligand>
</feature>
<feature type="binding site" evidence="1">
    <location>
        <position position="212"/>
    </location>
    <ligand>
        <name>Zn(2+)</name>
        <dbReference type="ChEBI" id="CHEBI:29105"/>
        <label>1</label>
    </ligand>
</feature>
<accession>Q16D44</accession>
<keyword id="KW-0143">Chaperone</keyword>
<keyword id="KW-0963">Cytoplasm</keyword>
<keyword id="KW-0235">DNA replication</keyword>
<keyword id="KW-0479">Metal-binding</keyword>
<keyword id="KW-1185">Reference proteome</keyword>
<keyword id="KW-0677">Repeat</keyword>
<keyword id="KW-0346">Stress response</keyword>
<keyword id="KW-0862">Zinc</keyword>
<keyword id="KW-0863">Zinc-finger</keyword>
<gene>
    <name evidence="1" type="primary">dnaJ</name>
    <name type="ordered locus">RD1_0379</name>
</gene>
<evidence type="ECO:0000255" key="1">
    <source>
        <dbReference type="HAMAP-Rule" id="MF_01152"/>
    </source>
</evidence>
<evidence type="ECO:0000256" key="2">
    <source>
        <dbReference type="SAM" id="MobiDB-lite"/>
    </source>
</evidence>
<comment type="function">
    <text evidence="1">Participates actively in the response to hyperosmotic and heat shock by preventing the aggregation of stress-denatured proteins and by disaggregating proteins, also in an autonomous, DnaK-independent fashion. Unfolded proteins bind initially to DnaJ; upon interaction with the DnaJ-bound protein, DnaK hydrolyzes its bound ATP, resulting in the formation of a stable complex. GrpE releases ADP from DnaK; ATP binding to DnaK triggers the release of the substrate protein, thus completing the reaction cycle. Several rounds of ATP-dependent interactions between DnaJ, DnaK and GrpE are required for fully efficient folding. Also involved, together with DnaK and GrpE, in the DNA replication of plasmids through activation of initiation proteins.</text>
</comment>
<comment type="cofactor">
    <cofactor evidence="1">
        <name>Zn(2+)</name>
        <dbReference type="ChEBI" id="CHEBI:29105"/>
    </cofactor>
    <text evidence="1">Binds 2 Zn(2+) ions per monomer.</text>
</comment>
<comment type="subunit">
    <text evidence="1">Homodimer.</text>
</comment>
<comment type="subcellular location">
    <subcellularLocation>
        <location evidence="1">Cytoplasm</location>
    </subcellularLocation>
</comment>
<comment type="domain">
    <text evidence="1">The J domain is necessary and sufficient to stimulate DnaK ATPase activity. Zinc center 1 plays an important role in the autonomous, DnaK-independent chaperone activity of DnaJ. Zinc center 2 is essential for interaction with DnaK and for DnaJ activity.</text>
</comment>
<comment type="similarity">
    <text evidence="1">Belongs to the DnaJ family.</text>
</comment>
<name>DNAJ_ROSDO</name>
<dbReference type="EMBL" id="CP000362">
    <property type="protein sequence ID" value="ABG30099.1"/>
    <property type="molecule type" value="Genomic_DNA"/>
</dbReference>
<dbReference type="RefSeq" id="WP_011566721.1">
    <property type="nucleotide sequence ID" value="NC_008209.1"/>
</dbReference>
<dbReference type="SMR" id="Q16D44"/>
<dbReference type="STRING" id="375451.RD1_0379"/>
<dbReference type="KEGG" id="rde:RD1_0379"/>
<dbReference type="eggNOG" id="COG0484">
    <property type="taxonomic scope" value="Bacteria"/>
</dbReference>
<dbReference type="HOGENOM" id="CLU_017633_0_7_5"/>
<dbReference type="OrthoDB" id="9779889at2"/>
<dbReference type="Proteomes" id="UP000007029">
    <property type="component" value="Chromosome"/>
</dbReference>
<dbReference type="GO" id="GO:0005737">
    <property type="term" value="C:cytoplasm"/>
    <property type="evidence" value="ECO:0007669"/>
    <property type="project" value="UniProtKB-SubCell"/>
</dbReference>
<dbReference type="GO" id="GO:0005524">
    <property type="term" value="F:ATP binding"/>
    <property type="evidence" value="ECO:0007669"/>
    <property type="project" value="InterPro"/>
</dbReference>
<dbReference type="GO" id="GO:0031072">
    <property type="term" value="F:heat shock protein binding"/>
    <property type="evidence" value="ECO:0007669"/>
    <property type="project" value="InterPro"/>
</dbReference>
<dbReference type="GO" id="GO:0051082">
    <property type="term" value="F:unfolded protein binding"/>
    <property type="evidence" value="ECO:0007669"/>
    <property type="project" value="UniProtKB-UniRule"/>
</dbReference>
<dbReference type="GO" id="GO:0008270">
    <property type="term" value="F:zinc ion binding"/>
    <property type="evidence" value="ECO:0007669"/>
    <property type="project" value="UniProtKB-UniRule"/>
</dbReference>
<dbReference type="GO" id="GO:0051085">
    <property type="term" value="P:chaperone cofactor-dependent protein refolding"/>
    <property type="evidence" value="ECO:0007669"/>
    <property type="project" value="TreeGrafter"/>
</dbReference>
<dbReference type="GO" id="GO:0006260">
    <property type="term" value="P:DNA replication"/>
    <property type="evidence" value="ECO:0007669"/>
    <property type="project" value="UniProtKB-KW"/>
</dbReference>
<dbReference type="GO" id="GO:0042026">
    <property type="term" value="P:protein refolding"/>
    <property type="evidence" value="ECO:0007669"/>
    <property type="project" value="TreeGrafter"/>
</dbReference>
<dbReference type="GO" id="GO:0009408">
    <property type="term" value="P:response to heat"/>
    <property type="evidence" value="ECO:0007669"/>
    <property type="project" value="InterPro"/>
</dbReference>
<dbReference type="CDD" id="cd06257">
    <property type="entry name" value="DnaJ"/>
    <property type="match status" value="1"/>
</dbReference>
<dbReference type="CDD" id="cd10747">
    <property type="entry name" value="DnaJ_C"/>
    <property type="match status" value="1"/>
</dbReference>
<dbReference type="FunFam" id="1.10.287.110:FF:000034">
    <property type="entry name" value="Chaperone protein DnaJ"/>
    <property type="match status" value="1"/>
</dbReference>
<dbReference type="FunFam" id="2.10.230.10:FF:000002">
    <property type="entry name" value="Molecular chaperone DnaJ"/>
    <property type="match status" value="1"/>
</dbReference>
<dbReference type="FunFam" id="2.60.260.20:FF:000004">
    <property type="entry name" value="Molecular chaperone DnaJ"/>
    <property type="match status" value="1"/>
</dbReference>
<dbReference type="Gene3D" id="1.10.287.110">
    <property type="entry name" value="DnaJ domain"/>
    <property type="match status" value="1"/>
</dbReference>
<dbReference type="Gene3D" id="2.10.230.10">
    <property type="entry name" value="Heat shock protein DnaJ, cysteine-rich domain"/>
    <property type="match status" value="1"/>
</dbReference>
<dbReference type="Gene3D" id="2.60.260.20">
    <property type="entry name" value="Urease metallochaperone UreE, N-terminal domain"/>
    <property type="match status" value="2"/>
</dbReference>
<dbReference type="HAMAP" id="MF_01152">
    <property type="entry name" value="DnaJ"/>
    <property type="match status" value="1"/>
</dbReference>
<dbReference type="InterPro" id="IPR012724">
    <property type="entry name" value="DnaJ"/>
</dbReference>
<dbReference type="InterPro" id="IPR002939">
    <property type="entry name" value="DnaJ_C"/>
</dbReference>
<dbReference type="InterPro" id="IPR001623">
    <property type="entry name" value="DnaJ_domain"/>
</dbReference>
<dbReference type="InterPro" id="IPR018253">
    <property type="entry name" value="DnaJ_domain_CS"/>
</dbReference>
<dbReference type="InterPro" id="IPR008971">
    <property type="entry name" value="HSP40/DnaJ_pept-bd"/>
</dbReference>
<dbReference type="InterPro" id="IPR001305">
    <property type="entry name" value="HSP_DnaJ_Cys-rich_dom"/>
</dbReference>
<dbReference type="InterPro" id="IPR036410">
    <property type="entry name" value="HSP_DnaJ_Cys-rich_dom_sf"/>
</dbReference>
<dbReference type="InterPro" id="IPR036869">
    <property type="entry name" value="J_dom_sf"/>
</dbReference>
<dbReference type="NCBIfam" id="TIGR02349">
    <property type="entry name" value="DnaJ_bact"/>
    <property type="match status" value="1"/>
</dbReference>
<dbReference type="NCBIfam" id="NF008035">
    <property type="entry name" value="PRK10767.1"/>
    <property type="match status" value="1"/>
</dbReference>
<dbReference type="PANTHER" id="PTHR43096:SF48">
    <property type="entry name" value="CHAPERONE PROTEIN DNAJ"/>
    <property type="match status" value="1"/>
</dbReference>
<dbReference type="PANTHER" id="PTHR43096">
    <property type="entry name" value="DNAJ HOMOLOG 1, MITOCHONDRIAL-RELATED"/>
    <property type="match status" value="1"/>
</dbReference>
<dbReference type="Pfam" id="PF00226">
    <property type="entry name" value="DnaJ"/>
    <property type="match status" value="1"/>
</dbReference>
<dbReference type="Pfam" id="PF01556">
    <property type="entry name" value="DnaJ_C"/>
    <property type="match status" value="1"/>
</dbReference>
<dbReference type="Pfam" id="PF00684">
    <property type="entry name" value="DnaJ_CXXCXGXG"/>
    <property type="match status" value="1"/>
</dbReference>
<dbReference type="PRINTS" id="PR00625">
    <property type="entry name" value="JDOMAIN"/>
</dbReference>
<dbReference type="SMART" id="SM00271">
    <property type="entry name" value="DnaJ"/>
    <property type="match status" value="1"/>
</dbReference>
<dbReference type="SUPFAM" id="SSF46565">
    <property type="entry name" value="Chaperone J-domain"/>
    <property type="match status" value="1"/>
</dbReference>
<dbReference type="SUPFAM" id="SSF57938">
    <property type="entry name" value="DnaJ/Hsp40 cysteine-rich domain"/>
    <property type="match status" value="1"/>
</dbReference>
<dbReference type="SUPFAM" id="SSF49493">
    <property type="entry name" value="HSP40/DnaJ peptide-binding domain"/>
    <property type="match status" value="2"/>
</dbReference>
<dbReference type="PROSITE" id="PS00636">
    <property type="entry name" value="DNAJ_1"/>
    <property type="match status" value="1"/>
</dbReference>
<dbReference type="PROSITE" id="PS50076">
    <property type="entry name" value="DNAJ_2"/>
    <property type="match status" value="1"/>
</dbReference>
<dbReference type="PROSITE" id="PS51188">
    <property type="entry name" value="ZF_CR"/>
    <property type="match status" value="1"/>
</dbReference>
<proteinExistence type="inferred from homology"/>
<protein>
    <recommendedName>
        <fullName evidence="1">Chaperone protein DnaJ</fullName>
    </recommendedName>
</protein>